<keyword id="KW-0025">Alternative splicing</keyword>
<keyword id="KW-0217">Developmental protein</keyword>
<keyword id="KW-0238">DNA-binding</keyword>
<keyword id="KW-0539">Nucleus</keyword>
<keyword id="KW-0563">Paired box</keyword>
<keyword id="KW-1185">Reference proteome</keyword>
<keyword id="KW-0804">Transcription</keyword>
<keyword id="KW-0805">Transcription regulation</keyword>
<name>PAX5_XENLA</name>
<comment type="function">
    <text evidence="2">Probable transcription factor.</text>
</comment>
<comment type="subcellular location">
    <subcellularLocation>
        <location evidence="1 3">Nucleus</location>
    </subcellularLocation>
</comment>
<comment type="alternative products">
    <event type="alternative splicing"/>
    <isoform>
        <id>Q9YH95-1</id>
        <name evidence="5">1</name>
        <sequence type="displayed"/>
    </isoform>
    <isoform>
        <id>Q9YH95-2</id>
        <name evidence="5">2</name>
        <sequence type="described" ref="VSP_052393"/>
    </isoform>
</comment>
<comment type="tissue specificity">
    <text evidence="5">First detected in mid-neurula embryos in the folding neural tube. With the completion of neurulation, expression becomes localized to the midbrain/hindbrain boundary (MHB) till at least stage 40. Expression is absent from regions adjacent to the MHB. In tailbuds, weakly and transiently expressed in the developing otic vesicle from stage 21 to stage 27.</text>
</comment>
<reference evidence="7 8" key="1">
    <citation type="journal article" date="1999" name="Dev. Genet.">
        <title>Xenopus Pax-2/5/8 orthologues: novel insights into Pax gene evolution and identification of Pax-8 as the earliest marker for otic and pronephric cell lineages.</title>
        <authorList>
            <person name="Heller N."/>
            <person name="Braendli A.W."/>
        </authorList>
    </citation>
    <scope>NUCLEOTIDE SEQUENCE [MRNA] (ISOFORMS 1 AND 2)</scope>
    <scope>ALTERNATIVE SPLICING</scope>
    <scope>TISSUE SPECIFICITY</scope>
    <source>
        <tissue evidence="8">Embryonic brain</tissue>
    </source>
</reference>
<organism>
    <name type="scientific">Xenopus laevis</name>
    <name type="common">African clawed frog</name>
    <dbReference type="NCBI Taxonomy" id="8355"/>
    <lineage>
        <taxon>Eukaryota</taxon>
        <taxon>Metazoa</taxon>
        <taxon>Chordata</taxon>
        <taxon>Craniata</taxon>
        <taxon>Vertebrata</taxon>
        <taxon>Euteleostomi</taxon>
        <taxon>Amphibia</taxon>
        <taxon>Batrachia</taxon>
        <taxon>Anura</taxon>
        <taxon>Pipoidea</taxon>
        <taxon>Pipidae</taxon>
        <taxon>Xenopodinae</taxon>
        <taxon>Xenopus</taxon>
        <taxon>Xenopus</taxon>
    </lineage>
</organism>
<evidence type="ECO:0000250" key="1">
    <source>
        <dbReference type="UniProtKB" id="Q02548"/>
    </source>
</evidence>
<evidence type="ECO:0000250" key="2">
    <source>
        <dbReference type="UniProtKB" id="Q9PUK5"/>
    </source>
</evidence>
<evidence type="ECO:0000255" key="3">
    <source>
        <dbReference type="PROSITE-ProRule" id="PRU00381"/>
    </source>
</evidence>
<evidence type="ECO:0000256" key="4">
    <source>
        <dbReference type="SAM" id="MobiDB-lite"/>
    </source>
</evidence>
<evidence type="ECO:0000269" key="5">
    <source>
    </source>
</evidence>
<evidence type="ECO:0000303" key="6">
    <source>
    </source>
</evidence>
<evidence type="ECO:0000305" key="7"/>
<evidence type="ECO:0000312" key="8">
    <source>
        <dbReference type="EMBL" id="CAA09230.1"/>
    </source>
</evidence>
<gene>
    <name evidence="1" type="primary">pax5</name>
    <name evidence="8" type="synonym">pax-5</name>
</gene>
<protein>
    <recommendedName>
        <fullName>Paired box protein Pax-5</fullName>
        <shortName>XPax-5</shortName>
    </recommendedName>
</protein>
<sequence length="388" mass="42006">MEIHCKHDPFAAMHRHGGVNQLGGVFVNGRPLPDVVRQRIVELAHQGVRPCDISRQLRVSHGCVSKILGRYYETGSIKPGVIGGSKPKVATPKVVDKIADYKRQNPTMFAWEIRDRLLAERVCDNDTVPSVSSINRIIRTKVQQPTNQQIPPSNHSIASTGSVTQVSSVSTDSAGSSYSISGILGITSSNAETNKRKRDEGIQESPIPNGHSLPGRDFLRKQMRGDLFTQQQLDVLDRVFERQHYTDIFTSTEPIKPEQTEYSAMASLTGGLDEMKSSLTSPSSADIGGTVPGPQSYPLVTGRDLASTTLPGYPPHVPPAGQGSYSAPTLTGMVPGSDFSGSPYSHPQYSSYNDSWRFPNPGLLGSPYYYSAARGGAPPATAAAYDRH</sequence>
<dbReference type="EMBL" id="AJ010503">
    <property type="protein sequence ID" value="CAA09230.1"/>
    <property type="molecule type" value="mRNA"/>
</dbReference>
<dbReference type="RefSeq" id="NP_001079237.1">
    <molecule id="Q9YH95-1"/>
    <property type="nucleotide sequence ID" value="NM_001085768.1"/>
</dbReference>
<dbReference type="SMR" id="Q9YH95"/>
<dbReference type="GeneID" id="378499"/>
<dbReference type="KEGG" id="xla:378499"/>
<dbReference type="AGR" id="Xenbase:XB-GENE-865318"/>
<dbReference type="CTD" id="378499"/>
<dbReference type="Xenbase" id="XB-GENE-865318">
    <property type="gene designation" value="pax5.L"/>
</dbReference>
<dbReference type="OrthoDB" id="3225452at2759"/>
<dbReference type="Proteomes" id="UP000186698">
    <property type="component" value="Chromosome 1L"/>
</dbReference>
<dbReference type="Bgee" id="378499">
    <property type="expression patterns" value="Expressed in spleen"/>
</dbReference>
<dbReference type="GO" id="GO:0005634">
    <property type="term" value="C:nucleus"/>
    <property type="evidence" value="ECO:0000250"/>
    <property type="project" value="UniProtKB"/>
</dbReference>
<dbReference type="GO" id="GO:0003677">
    <property type="term" value="F:DNA binding"/>
    <property type="evidence" value="ECO:0000250"/>
    <property type="project" value="UniProtKB"/>
</dbReference>
<dbReference type="GO" id="GO:0003700">
    <property type="term" value="F:DNA-binding transcription factor activity"/>
    <property type="evidence" value="ECO:0000250"/>
    <property type="project" value="UniProtKB"/>
</dbReference>
<dbReference type="GO" id="GO:0000981">
    <property type="term" value="F:DNA-binding transcription factor activity, RNA polymerase II-specific"/>
    <property type="evidence" value="ECO:0000318"/>
    <property type="project" value="GO_Central"/>
</dbReference>
<dbReference type="GO" id="GO:0000978">
    <property type="term" value="F:RNA polymerase II cis-regulatory region sequence-specific DNA binding"/>
    <property type="evidence" value="ECO:0000318"/>
    <property type="project" value="GO_Central"/>
</dbReference>
<dbReference type="GO" id="GO:0007399">
    <property type="term" value="P:nervous system development"/>
    <property type="evidence" value="ECO:0000318"/>
    <property type="project" value="GO_Central"/>
</dbReference>
<dbReference type="GO" id="GO:0006355">
    <property type="term" value="P:regulation of DNA-templated transcription"/>
    <property type="evidence" value="ECO:0000250"/>
    <property type="project" value="UniProtKB"/>
</dbReference>
<dbReference type="GO" id="GO:0006357">
    <property type="term" value="P:regulation of transcription by RNA polymerase II"/>
    <property type="evidence" value="ECO:0000318"/>
    <property type="project" value="GO_Central"/>
</dbReference>
<dbReference type="GO" id="GO:0007423">
    <property type="term" value="P:sensory organ development"/>
    <property type="evidence" value="ECO:0000318"/>
    <property type="project" value="GO_Central"/>
</dbReference>
<dbReference type="CDD" id="cd00131">
    <property type="entry name" value="PAX"/>
    <property type="match status" value="1"/>
</dbReference>
<dbReference type="FunFam" id="1.10.10.10:FF:000013">
    <property type="entry name" value="Paired box 8 isoform 1"/>
    <property type="match status" value="1"/>
</dbReference>
<dbReference type="FunFam" id="1.10.10.10:FF:000003">
    <property type="entry name" value="Paired box protein Pax-6"/>
    <property type="match status" value="1"/>
</dbReference>
<dbReference type="Gene3D" id="1.10.10.10">
    <property type="entry name" value="Winged helix-like DNA-binding domain superfamily/Winged helix DNA-binding domain"/>
    <property type="match status" value="2"/>
</dbReference>
<dbReference type="InterPro" id="IPR009057">
    <property type="entry name" value="Homeodomain-like_sf"/>
</dbReference>
<dbReference type="InterPro" id="IPR043182">
    <property type="entry name" value="PAIRED_DNA-bd_dom"/>
</dbReference>
<dbReference type="InterPro" id="IPR001523">
    <property type="entry name" value="Paired_dom"/>
</dbReference>
<dbReference type="InterPro" id="IPR022130">
    <property type="entry name" value="Pax2_C"/>
</dbReference>
<dbReference type="InterPro" id="IPR043565">
    <property type="entry name" value="PAX_fam"/>
</dbReference>
<dbReference type="InterPro" id="IPR036388">
    <property type="entry name" value="WH-like_DNA-bd_sf"/>
</dbReference>
<dbReference type="PANTHER" id="PTHR45636:SF20">
    <property type="entry name" value="PAIRED BOX PROTEIN PAX-5"/>
    <property type="match status" value="1"/>
</dbReference>
<dbReference type="PANTHER" id="PTHR45636">
    <property type="entry name" value="PAIRED BOX PROTEIN PAX-6-RELATED-RELATED"/>
    <property type="match status" value="1"/>
</dbReference>
<dbReference type="Pfam" id="PF00292">
    <property type="entry name" value="PAX"/>
    <property type="match status" value="1"/>
</dbReference>
<dbReference type="Pfam" id="PF12403">
    <property type="entry name" value="Pax2_C"/>
    <property type="match status" value="1"/>
</dbReference>
<dbReference type="PRINTS" id="PR00027">
    <property type="entry name" value="PAIREDBOX"/>
</dbReference>
<dbReference type="SMART" id="SM00351">
    <property type="entry name" value="PAX"/>
    <property type="match status" value="1"/>
</dbReference>
<dbReference type="SUPFAM" id="SSF46689">
    <property type="entry name" value="Homeodomain-like"/>
    <property type="match status" value="1"/>
</dbReference>
<dbReference type="PROSITE" id="PS00034">
    <property type="entry name" value="PAIRED_1"/>
    <property type="match status" value="1"/>
</dbReference>
<dbReference type="PROSITE" id="PS51057">
    <property type="entry name" value="PAIRED_2"/>
    <property type="match status" value="1"/>
</dbReference>
<feature type="chain" id="PRO_0000286865" description="Paired box protein Pax-5">
    <location>
        <begin position="1"/>
        <end position="388"/>
    </location>
</feature>
<feature type="DNA-binding region" description="Paired" evidence="3">
    <location>
        <begin position="15"/>
        <end position="141"/>
    </location>
</feature>
<feature type="region of interest" description="PAI subdomain" evidence="3">
    <location>
        <begin position="18"/>
        <end position="74"/>
    </location>
</feature>
<feature type="region of interest" description="RED subdomain" evidence="3">
    <location>
        <begin position="93"/>
        <end position="141"/>
    </location>
</feature>
<feature type="region of interest" description="Disordered" evidence="4">
    <location>
        <begin position="143"/>
        <end position="162"/>
    </location>
</feature>
<feature type="region of interest" description="Disordered" evidence="4">
    <location>
        <begin position="191"/>
        <end position="217"/>
    </location>
</feature>
<feature type="compositionally biased region" description="Polar residues" evidence="4">
    <location>
        <begin position="143"/>
        <end position="158"/>
    </location>
</feature>
<feature type="splice variant" id="VSP_052393" description="In isoform 2." evidence="6">
    <original>Q</original>
    <variation>QVRWLPRLDQVEFSGGSAAQWRDFRLALHHEPHSRTS</variation>
    <location>
        <position position="259"/>
    </location>
</feature>
<accession>Q9YH95</accession>
<proteinExistence type="evidence at transcript level"/>